<dbReference type="EC" id="2.5.1.6" evidence="1"/>
<dbReference type="EMBL" id="CP000230">
    <property type="protein sequence ID" value="ABC24570.1"/>
    <property type="molecule type" value="Genomic_DNA"/>
</dbReference>
<dbReference type="RefSeq" id="YP_428857.1">
    <property type="nucleotide sequence ID" value="NC_007643.1"/>
</dbReference>
<dbReference type="SMR" id="Q2RMS5"/>
<dbReference type="STRING" id="269796.Rru_A3776"/>
<dbReference type="EnsemblBacteria" id="ABC24570">
    <property type="protein sequence ID" value="ABC24570"/>
    <property type="gene ID" value="Rru_A3776"/>
</dbReference>
<dbReference type="KEGG" id="rru:Rru_A3776"/>
<dbReference type="PATRIC" id="fig|269796.9.peg.3898"/>
<dbReference type="eggNOG" id="COG0192">
    <property type="taxonomic scope" value="Bacteria"/>
</dbReference>
<dbReference type="HOGENOM" id="CLU_041802_1_1_5"/>
<dbReference type="PhylomeDB" id="Q2RMS5"/>
<dbReference type="UniPathway" id="UPA00315">
    <property type="reaction ID" value="UER00080"/>
</dbReference>
<dbReference type="Proteomes" id="UP000001929">
    <property type="component" value="Chromosome"/>
</dbReference>
<dbReference type="GO" id="GO:0005737">
    <property type="term" value="C:cytoplasm"/>
    <property type="evidence" value="ECO:0007669"/>
    <property type="project" value="UniProtKB-SubCell"/>
</dbReference>
<dbReference type="GO" id="GO:0005524">
    <property type="term" value="F:ATP binding"/>
    <property type="evidence" value="ECO:0007669"/>
    <property type="project" value="UniProtKB-UniRule"/>
</dbReference>
<dbReference type="GO" id="GO:0000287">
    <property type="term" value="F:magnesium ion binding"/>
    <property type="evidence" value="ECO:0007669"/>
    <property type="project" value="UniProtKB-UniRule"/>
</dbReference>
<dbReference type="GO" id="GO:0004478">
    <property type="term" value="F:methionine adenosyltransferase activity"/>
    <property type="evidence" value="ECO:0007669"/>
    <property type="project" value="UniProtKB-UniRule"/>
</dbReference>
<dbReference type="GO" id="GO:0006730">
    <property type="term" value="P:one-carbon metabolic process"/>
    <property type="evidence" value="ECO:0007669"/>
    <property type="project" value="UniProtKB-KW"/>
</dbReference>
<dbReference type="GO" id="GO:0006556">
    <property type="term" value="P:S-adenosylmethionine biosynthetic process"/>
    <property type="evidence" value="ECO:0007669"/>
    <property type="project" value="UniProtKB-UniRule"/>
</dbReference>
<dbReference type="CDD" id="cd18079">
    <property type="entry name" value="S-AdoMet_synt"/>
    <property type="match status" value="1"/>
</dbReference>
<dbReference type="Gene3D" id="3.30.300.10">
    <property type="match status" value="3"/>
</dbReference>
<dbReference type="HAMAP" id="MF_00086">
    <property type="entry name" value="S_AdoMet_synth1"/>
    <property type="match status" value="1"/>
</dbReference>
<dbReference type="InterPro" id="IPR022631">
    <property type="entry name" value="ADOMET_SYNTHASE_CS"/>
</dbReference>
<dbReference type="InterPro" id="IPR022630">
    <property type="entry name" value="S-AdoMet_synt_C"/>
</dbReference>
<dbReference type="InterPro" id="IPR022629">
    <property type="entry name" value="S-AdoMet_synt_central"/>
</dbReference>
<dbReference type="InterPro" id="IPR022628">
    <property type="entry name" value="S-AdoMet_synt_N"/>
</dbReference>
<dbReference type="InterPro" id="IPR002133">
    <property type="entry name" value="S-AdoMet_synthetase"/>
</dbReference>
<dbReference type="InterPro" id="IPR022636">
    <property type="entry name" value="S-AdoMet_synthetase_sfam"/>
</dbReference>
<dbReference type="NCBIfam" id="TIGR01034">
    <property type="entry name" value="metK"/>
    <property type="match status" value="1"/>
</dbReference>
<dbReference type="PANTHER" id="PTHR11964">
    <property type="entry name" value="S-ADENOSYLMETHIONINE SYNTHETASE"/>
    <property type="match status" value="1"/>
</dbReference>
<dbReference type="Pfam" id="PF02773">
    <property type="entry name" value="S-AdoMet_synt_C"/>
    <property type="match status" value="1"/>
</dbReference>
<dbReference type="Pfam" id="PF02772">
    <property type="entry name" value="S-AdoMet_synt_M"/>
    <property type="match status" value="1"/>
</dbReference>
<dbReference type="Pfam" id="PF00438">
    <property type="entry name" value="S-AdoMet_synt_N"/>
    <property type="match status" value="1"/>
</dbReference>
<dbReference type="PIRSF" id="PIRSF000497">
    <property type="entry name" value="MAT"/>
    <property type="match status" value="1"/>
</dbReference>
<dbReference type="SUPFAM" id="SSF55973">
    <property type="entry name" value="S-adenosylmethionine synthetase"/>
    <property type="match status" value="3"/>
</dbReference>
<dbReference type="PROSITE" id="PS00376">
    <property type="entry name" value="ADOMET_SYNTHASE_1"/>
    <property type="match status" value="1"/>
</dbReference>
<dbReference type="PROSITE" id="PS00377">
    <property type="entry name" value="ADOMET_SYNTHASE_2"/>
    <property type="match status" value="1"/>
</dbReference>
<gene>
    <name evidence="1" type="primary">metK2</name>
    <name type="ordered locus">Rru_A3776</name>
</gene>
<evidence type="ECO:0000255" key="1">
    <source>
        <dbReference type="HAMAP-Rule" id="MF_00086"/>
    </source>
</evidence>
<accession>Q2RMS5</accession>
<organism>
    <name type="scientific">Rhodospirillum rubrum (strain ATCC 11170 / ATH 1.1.1 / DSM 467 / LMG 4362 / NCIMB 8255 / S1)</name>
    <dbReference type="NCBI Taxonomy" id="269796"/>
    <lineage>
        <taxon>Bacteria</taxon>
        <taxon>Pseudomonadati</taxon>
        <taxon>Pseudomonadota</taxon>
        <taxon>Alphaproteobacteria</taxon>
        <taxon>Rhodospirillales</taxon>
        <taxon>Rhodospirillaceae</taxon>
        <taxon>Rhodospirillum</taxon>
    </lineage>
</organism>
<sequence length="389" mass="41753">MAQSEYLFTSESVSEGHPDKVCDRISDAIVDAFLAEDPHSRVALETMATTNFVVLAGEVRGPDSLTHDRLKEIAREAIKDIGYEQRGFHWKDAEIVSHVHSQSADIAVGVDAAGNKDEGAGDQGIMFGYACTETEELMPAPIALSHAILKSLAEFRHGGDTSFGPDSKSQVTLRYVDGKPVGAASVVVSTQHAGNLSQDEVRELVRPHVLKVLPEGWMCPEEEFYVNPTGRFVIGGPDGDCGLTGRKIIVDTYGGAAPHGGGAFSGKDPTKVDRSAAYAARYLAKNVVAAGLAEKCVIQVSYAIGVSKPLSVYVNTQGTGQVDEQRLAVVLQQLMDLSPRGIRQHLQLSRPIYARTAAYGHFGRKPEKDGGFSWERTDLVAGLKTAFGA</sequence>
<comment type="function">
    <text evidence="1">Catalyzes the formation of S-adenosylmethionine (AdoMet) from methionine and ATP. The overall synthetic reaction is composed of two sequential steps, AdoMet formation and the subsequent tripolyphosphate hydrolysis which occurs prior to release of AdoMet from the enzyme.</text>
</comment>
<comment type="catalytic activity">
    <reaction evidence="1">
        <text>L-methionine + ATP + H2O = S-adenosyl-L-methionine + phosphate + diphosphate</text>
        <dbReference type="Rhea" id="RHEA:21080"/>
        <dbReference type="ChEBI" id="CHEBI:15377"/>
        <dbReference type="ChEBI" id="CHEBI:30616"/>
        <dbReference type="ChEBI" id="CHEBI:33019"/>
        <dbReference type="ChEBI" id="CHEBI:43474"/>
        <dbReference type="ChEBI" id="CHEBI:57844"/>
        <dbReference type="ChEBI" id="CHEBI:59789"/>
        <dbReference type="EC" id="2.5.1.6"/>
    </reaction>
</comment>
<comment type="cofactor">
    <cofactor evidence="1">
        <name>Mg(2+)</name>
        <dbReference type="ChEBI" id="CHEBI:18420"/>
    </cofactor>
    <text evidence="1">Binds 2 divalent ions per subunit.</text>
</comment>
<comment type="cofactor">
    <cofactor evidence="1">
        <name>K(+)</name>
        <dbReference type="ChEBI" id="CHEBI:29103"/>
    </cofactor>
    <text evidence="1">Binds 1 potassium ion per subunit.</text>
</comment>
<comment type="pathway">
    <text evidence="1">Amino-acid biosynthesis; S-adenosyl-L-methionine biosynthesis; S-adenosyl-L-methionine from L-methionine: step 1/1.</text>
</comment>
<comment type="subunit">
    <text evidence="1">Homotetramer; dimer of dimers.</text>
</comment>
<comment type="subcellular location">
    <subcellularLocation>
        <location evidence="1">Cytoplasm</location>
    </subcellularLocation>
</comment>
<comment type="similarity">
    <text evidence="1">Belongs to the AdoMet synthase family.</text>
</comment>
<name>METK2_RHORT</name>
<feature type="chain" id="PRO_0000241031" description="S-adenosylmethionine synthase 2">
    <location>
        <begin position="1"/>
        <end position="389"/>
    </location>
</feature>
<feature type="region of interest" description="Flexible loop" evidence="1">
    <location>
        <begin position="102"/>
        <end position="112"/>
    </location>
</feature>
<feature type="binding site" description="in other chain" evidence="1">
    <location>
        <position position="17"/>
    </location>
    <ligand>
        <name>ATP</name>
        <dbReference type="ChEBI" id="CHEBI:30616"/>
        <note>ligand shared between two neighboring subunits</note>
    </ligand>
</feature>
<feature type="binding site" evidence="1">
    <location>
        <position position="19"/>
    </location>
    <ligand>
        <name>Mg(2+)</name>
        <dbReference type="ChEBI" id="CHEBI:18420"/>
    </ligand>
</feature>
<feature type="binding site" evidence="1">
    <location>
        <position position="45"/>
    </location>
    <ligand>
        <name>K(+)</name>
        <dbReference type="ChEBI" id="CHEBI:29103"/>
    </ligand>
</feature>
<feature type="binding site" description="in other chain" evidence="1">
    <location>
        <position position="58"/>
    </location>
    <ligand>
        <name>L-methionine</name>
        <dbReference type="ChEBI" id="CHEBI:57844"/>
        <note>ligand shared between two neighboring subunits</note>
    </ligand>
</feature>
<feature type="binding site" description="in other chain" evidence="1">
    <location>
        <position position="102"/>
    </location>
    <ligand>
        <name>L-methionine</name>
        <dbReference type="ChEBI" id="CHEBI:57844"/>
        <note>ligand shared between two neighboring subunits</note>
    </ligand>
</feature>
<feature type="binding site" description="in other chain" evidence="1">
    <location>
        <begin position="166"/>
        <end position="168"/>
    </location>
    <ligand>
        <name>ATP</name>
        <dbReference type="ChEBI" id="CHEBI:30616"/>
        <note>ligand shared between two neighboring subunits</note>
    </ligand>
</feature>
<feature type="binding site" description="in other chain" evidence="1">
    <location>
        <begin position="231"/>
        <end position="232"/>
    </location>
    <ligand>
        <name>ATP</name>
        <dbReference type="ChEBI" id="CHEBI:30616"/>
        <note>ligand shared between two neighboring subunits</note>
    </ligand>
</feature>
<feature type="binding site" evidence="1">
    <location>
        <position position="240"/>
    </location>
    <ligand>
        <name>ATP</name>
        <dbReference type="ChEBI" id="CHEBI:30616"/>
        <note>ligand shared between two neighboring subunits</note>
    </ligand>
</feature>
<feature type="binding site" evidence="1">
    <location>
        <position position="240"/>
    </location>
    <ligand>
        <name>L-methionine</name>
        <dbReference type="ChEBI" id="CHEBI:57844"/>
        <note>ligand shared between two neighboring subunits</note>
    </ligand>
</feature>
<feature type="binding site" description="in other chain" evidence="1">
    <location>
        <begin position="246"/>
        <end position="247"/>
    </location>
    <ligand>
        <name>ATP</name>
        <dbReference type="ChEBI" id="CHEBI:30616"/>
        <note>ligand shared between two neighboring subunits</note>
    </ligand>
</feature>
<feature type="binding site" evidence="1">
    <location>
        <position position="263"/>
    </location>
    <ligand>
        <name>ATP</name>
        <dbReference type="ChEBI" id="CHEBI:30616"/>
        <note>ligand shared between two neighboring subunits</note>
    </ligand>
</feature>
<feature type="binding site" evidence="1">
    <location>
        <position position="267"/>
    </location>
    <ligand>
        <name>ATP</name>
        <dbReference type="ChEBI" id="CHEBI:30616"/>
        <note>ligand shared between two neighboring subunits</note>
    </ligand>
</feature>
<feature type="binding site" description="in other chain" evidence="1">
    <location>
        <position position="271"/>
    </location>
    <ligand>
        <name>L-methionine</name>
        <dbReference type="ChEBI" id="CHEBI:57844"/>
        <note>ligand shared between two neighboring subunits</note>
    </ligand>
</feature>
<reference key="1">
    <citation type="journal article" date="2011" name="Stand. Genomic Sci.">
        <title>Complete genome sequence of Rhodospirillum rubrum type strain (S1).</title>
        <authorList>
            <person name="Munk A.C."/>
            <person name="Copeland A."/>
            <person name="Lucas S."/>
            <person name="Lapidus A."/>
            <person name="Del Rio T.G."/>
            <person name="Barry K."/>
            <person name="Detter J.C."/>
            <person name="Hammon N."/>
            <person name="Israni S."/>
            <person name="Pitluck S."/>
            <person name="Brettin T."/>
            <person name="Bruce D."/>
            <person name="Han C."/>
            <person name="Tapia R."/>
            <person name="Gilna P."/>
            <person name="Schmutz J."/>
            <person name="Larimer F."/>
            <person name="Land M."/>
            <person name="Kyrpides N.C."/>
            <person name="Mavromatis K."/>
            <person name="Richardson P."/>
            <person name="Rohde M."/>
            <person name="Goeker M."/>
            <person name="Klenk H.P."/>
            <person name="Zhang Y."/>
            <person name="Roberts G.P."/>
            <person name="Reslewic S."/>
            <person name="Schwartz D.C."/>
        </authorList>
    </citation>
    <scope>NUCLEOTIDE SEQUENCE [LARGE SCALE GENOMIC DNA]</scope>
    <source>
        <strain>ATCC 11170 / ATH 1.1.1 / DSM 467 / LMG 4362 / NCIMB 8255 / S1</strain>
    </source>
</reference>
<proteinExistence type="inferred from homology"/>
<keyword id="KW-0067">ATP-binding</keyword>
<keyword id="KW-0963">Cytoplasm</keyword>
<keyword id="KW-0460">Magnesium</keyword>
<keyword id="KW-0479">Metal-binding</keyword>
<keyword id="KW-0547">Nucleotide-binding</keyword>
<keyword id="KW-0554">One-carbon metabolism</keyword>
<keyword id="KW-0630">Potassium</keyword>
<keyword id="KW-1185">Reference proteome</keyword>
<keyword id="KW-0808">Transferase</keyword>
<protein>
    <recommendedName>
        <fullName evidence="1">S-adenosylmethionine synthase 2</fullName>
        <shortName evidence="1">AdoMet synthase 2</shortName>
        <ecNumber evidence="1">2.5.1.6</ecNumber>
    </recommendedName>
    <alternativeName>
        <fullName evidence="1">MAT 2</fullName>
    </alternativeName>
    <alternativeName>
        <fullName evidence="1">Methionine adenosyltransferase 2</fullName>
    </alternativeName>
</protein>